<proteinExistence type="inferred from homology"/>
<organism>
    <name type="scientific">Bombus terrestris</name>
    <name type="common">Buff-tailed bumblebee</name>
    <name type="synonym">Apis terrestris</name>
    <dbReference type="NCBI Taxonomy" id="30195"/>
    <lineage>
        <taxon>Eukaryota</taxon>
        <taxon>Metazoa</taxon>
        <taxon>Ecdysozoa</taxon>
        <taxon>Arthropoda</taxon>
        <taxon>Hexapoda</taxon>
        <taxon>Insecta</taxon>
        <taxon>Pterygota</taxon>
        <taxon>Neoptera</taxon>
        <taxon>Endopterygota</taxon>
        <taxon>Hymenoptera</taxon>
        <taxon>Apocrita</taxon>
        <taxon>Aculeata</taxon>
        <taxon>Apoidea</taxon>
        <taxon>Anthophila</taxon>
        <taxon>Apidae</taxon>
        <taxon>Bombus</taxon>
        <taxon>Bombus</taxon>
    </lineage>
</organism>
<keyword id="KW-1015">Disulfide bond</keyword>
<keyword id="KW-1199">Hemostasis impairing toxin</keyword>
<keyword id="KW-0646">Protease inhibitor</keyword>
<keyword id="KW-0964">Secreted</keyword>
<keyword id="KW-0722">Serine protease inhibitor</keyword>
<keyword id="KW-0732">Signal</keyword>
<keyword id="KW-0800">Toxin</keyword>
<dbReference type="EMBL" id="EU860215">
    <property type="protein sequence ID" value="ACJ54179.1"/>
    <property type="molecule type" value="mRNA"/>
</dbReference>
<dbReference type="EMBL" id="JX273645">
    <property type="protein sequence ID" value="AFR69309.1"/>
    <property type="molecule type" value="Genomic_DNA"/>
</dbReference>
<dbReference type="EMBL" id="JX273646">
    <property type="protein sequence ID" value="AFR69310.1"/>
    <property type="molecule type" value="mRNA"/>
</dbReference>
<dbReference type="RefSeq" id="XP_003396032.1">
    <property type="nucleotide sequence ID" value="XM_003395984.2"/>
</dbReference>
<dbReference type="SMR" id="D8KY58"/>
<dbReference type="EnsemblMetazoa" id="XM_003395984.3">
    <property type="protein sequence ID" value="XP_003396032.1"/>
    <property type="gene ID" value="LOC100631053"/>
</dbReference>
<dbReference type="KEGG" id="bter:100631053"/>
<dbReference type="Proteomes" id="UP000835206">
    <property type="component" value="Unplaced"/>
</dbReference>
<dbReference type="GO" id="GO:0005576">
    <property type="term" value="C:extracellular region"/>
    <property type="evidence" value="ECO:0000303"/>
    <property type="project" value="UniProtKB"/>
</dbReference>
<dbReference type="GO" id="GO:0005615">
    <property type="term" value="C:extracellular space"/>
    <property type="evidence" value="ECO:0007669"/>
    <property type="project" value="TreeGrafter"/>
</dbReference>
<dbReference type="GO" id="GO:0004867">
    <property type="term" value="F:serine-type endopeptidase inhibitor activity"/>
    <property type="evidence" value="ECO:0000314"/>
    <property type="project" value="UniProtKB"/>
</dbReference>
<dbReference type="GO" id="GO:0090729">
    <property type="term" value="F:toxin activity"/>
    <property type="evidence" value="ECO:0000314"/>
    <property type="project" value="UniProtKB"/>
</dbReference>
<dbReference type="GO" id="GO:0051918">
    <property type="term" value="P:negative regulation of fibrinolysis"/>
    <property type="evidence" value="ECO:0000314"/>
    <property type="project" value="CACAO"/>
</dbReference>
<dbReference type="GO" id="GO:0140099">
    <property type="term" value="P:venom-mediated suppression of fibrinolysis in another organism"/>
    <property type="evidence" value="ECO:0000314"/>
    <property type="project" value="UniProtKB"/>
</dbReference>
<dbReference type="CDD" id="cd22603">
    <property type="entry name" value="Kunitz_SmCI_3-like"/>
    <property type="match status" value="1"/>
</dbReference>
<dbReference type="FunFam" id="4.10.410.10:FF:000021">
    <property type="entry name" value="Serine protease inhibitor, putative"/>
    <property type="match status" value="1"/>
</dbReference>
<dbReference type="Gene3D" id="4.10.410.10">
    <property type="entry name" value="Pancreatic trypsin inhibitor Kunitz domain"/>
    <property type="match status" value="1"/>
</dbReference>
<dbReference type="InterPro" id="IPR002223">
    <property type="entry name" value="Kunitz_BPTI"/>
</dbReference>
<dbReference type="InterPro" id="IPR036880">
    <property type="entry name" value="Kunitz_BPTI_sf"/>
</dbReference>
<dbReference type="InterPro" id="IPR020901">
    <property type="entry name" value="Prtase_inh_Kunz-CS"/>
</dbReference>
<dbReference type="InterPro" id="IPR050098">
    <property type="entry name" value="TFPI/VKTCI-like"/>
</dbReference>
<dbReference type="PANTHER" id="PTHR10083">
    <property type="entry name" value="KUNITZ-TYPE PROTEASE INHIBITOR-RELATED"/>
    <property type="match status" value="1"/>
</dbReference>
<dbReference type="PANTHER" id="PTHR10083:SF328">
    <property type="entry name" value="TISSUE FACTOR PATHWAY INHIBITOR"/>
    <property type="match status" value="1"/>
</dbReference>
<dbReference type="Pfam" id="PF00014">
    <property type="entry name" value="Kunitz_BPTI"/>
    <property type="match status" value="1"/>
</dbReference>
<dbReference type="PRINTS" id="PR00759">
    <property type="entry name" value="BASICPTASE"/>
</dbReference>
<dbReference type="SMART" id="SM00131">
    <property type="entry name" value="KU"/>
    <property type="match status" value="1"/>
</dbReference>
<dbReference type="SUPFAM" id="SSF57362">
    <property type="entry name" value="BPTI-like"/>
    <property type="match status" value="1"/>
</dbReference>
<dbReference type="PROSITE" id="PS00280">
    <property type="entry name" value="BPTI_KUNITZ_1"/>
    <property type="match status" value="1"/>
</dbReference>
<dbReference type="PROSITE" id="PS50279">
    <property type="entry name" value="BPTI_KUNITZ_2"/>
    <property type="match status" value="1"/>
</dbReference>
<reference evidence="8" key="1">
    <citation type="journal article" date="2013" name="Toxicon">
        <title>Molecular cloning and antifibrinolytic activity of a serine protease inhibitor from bumblebee (Bombus terrestris) venom.</title>
        <authorList>
            <person name="Qiu Y."/>
            <person name="Lee K.S."/>
            <person name="Choo Y.M."/>
            <person name="Kong D."/>
            <person name="Yoon H.J."/>
            <person name="Jin B.R."/>
        </authorList>
    </citation>
    <scope>NUCLEOTIDE SEQUENCE [GENOMIC DNA / MRNA]</scope>
    <scope>FUNCTION</scope>
    <scope>RECOMBINANT EXPRESSION</scope>
</reference>
<reference evidence="9 10" key="2">
    <citation type="submission" date="2008-06" db="EMBL/GenBank/DDBJ databases">
        <title>Molecular cloning of cDNA for kazal-type proteinase inhibitior from the bumblebee Bombus terrestris.</title>
        <authorList>
            <person name="Kim S.R."/>
            <person name="Yoon H.J."/>
            <person name="Park K.-H."/>
            <person name="Yun E.-Y."/>
            <person name="Kim I."/>
            <person name="Jin B.-R."/>
            <person name="Hwang J.-S."/>
        </authorList>
    </citation>
    <scope>NUCLEOTIDE SEQUENCE [MRNA]</scope>
</reference>
<accession>D8KY58</accession>
<feature type="signal peptide" evidence="2">
    <location>
        <begin position="1"/>
        <end position="24"/>
    </location>
</feature>
<feature type="chain" id="PRO_0000429467" description="Kunitz-type serine protease inhibitor Bt-KTI" evidence="7">
    <location>
        <begin position="25"/>
        <end position="82"/>
    </location>
</feature>
<feature type="domain" description="BPTI/Kunitz inhibitor" evidence="3">
    <location>
        <begin position="30"/>
        <end position="80"/>
    </location>
</feature>
<feature type="site" description="Reactive bond for trypsin" evidence="1">
    <location>
        <begin position="40"/>
        <end position="41"/>
    </location>
</feature>
<feature type="disulfide bond" evidence="3">
    <location>
        <begin position="30"/>
        <end position="80"/>
    </location>
</feature>
<feature type="disulfide bond" evidence="3">
    <location>
        <begin position="39"/>
        <end position="63"/>
    </location>
</feature>
<feature type="disulfide bond" evidence="3">
    <location>
        <begin position="55"/>
        <end position="76"/>
    </location>
</feature>
<comment type="function">
    <text evidence="4">Serine protease inhibitor that inhibits plasmin (Ki=2.01 nM) and trypsin. Acts as an antifibrinolytic agent.</text>
</comment>
<comment type="subcellular location">
    <subcellularLocation>
        <location evidence="7">Secreted</location>
    </subcellularLocation>
</comment>
<comment type="tissue specificity">
    <text evidence="7">Expressed by the venom gland.</text>
</comment>
<comment type="miscellaneous">
    <text evidence="7">Negative results: does not inhibit chymotrypsin, factor Xa, thrombin, and tissue plasminogen activator (t-PA).</text>
</comment>
<comment type="similarity">
    <text evidence="6">Belongs to the venom Kunitz-type family.</text>
</comment>
<sequence>MNHKFIALLLVVLCCALSVHQVSAEIPSHCTLPLATGTCRGYFPRFGYNVEMGKCVEFIYGGCDGNANNFRNLEECQQSCSV</sequence>
<name>VKT_BOMTE</name>
<protein>
    <recommendedName>
        <fullName evidence="5">Kunitz-type serine protease inhibitor Bt-KTI</fullName>
    </recommendedName>
</protein>
<evidence type="ECO:0000250" key="1"/>
<evidence type="ECO:0000255" key="2"/>
<evidence type="ECO:0000255" key="3">
    <source>
        <dbReference type="PROSITE-ProRule" id="PRU00031"/>
    </source>
</evidence>
<evidence type="ECO:0000269" key="4">
    <source>
    </source>
</evidence>
<evidence type="ECO:0000303" key="5">
    <source>
    </source>
</evidence>
<evidence type="ECO:0000305" key="6"/>
<evidence type="ECO:0000305" key="7">
    <source>
    </source>
</evidence>
<evidence type="ECO:0000312" key="8">
    <source>
        <dbReference type="EMBL" id="ACJ54179.1"/>
    </source>
</evidence>
<evidence type="ECO:0000312" key="9">
    <source>
        <dbReference type="EMBL" id="AFR69309.1"/>
    </source>
</evidence>
<evidence type="ECO:0000312" key="10">
    <source>
        <dbReference type="EMBL" id="AFR69310.1"/>
    </source>
</evidence>